<evidence type="ECO:0000255" key="1">
    <source>
        <dbReference type="HAMAP-Rule" id="MF_00040"/>
    </source>
</evidence>
<feature type="chain" id="PRO_0000167427" description="Ribosome-recycling factor">
    <location>
        <begin position="1"/>
        <end position="186"/>
    </location>
</feature>
<comment type="function">
    <text evidence="1">Responsible for the release of ribosomes from messenger RNA at the termination of protein biosynthesis. May increase the efficiency of translation by recycling ribosomes from one round of translation to another.</text>
</comment>
<comment type="subcellular location">
    <subcellularLocation>
        <location evidence="1">Cytoplasm</location>
    </subcellularLocation>
</comment>
<comment type="similarity">
    <text evidence="1">Belongs to the RRF family.</text>
</comment>
<accession>Q8G0D8</accession>
<accession>G0KA81</accession>
<proteinExistence type="inferred from homology"/>
<keyword id="KW-0963">Cytoplasm</keyword>
<keyword id="KW-0648">Protein biosynthesis</keyword>
<protein>
    <recommendedName>
        <fullName evidence="1">Ribosome-recycling factor</fullName>
        <shortName evidence="1">RRF</shortName>
    </recommendedName>
    <alternativeName>
        <fullName evidence="1">Ribosome-releasing factor</fullName>
    </alternativeName>
</protein>
<reference key="1">
    <citation type="journal article" date="2002" name="Proc. Natl. Acad. Sci. U.S.A.">
        <title>The Brucella suis genome reveals fundamental similarities between animal and plant pathogens and symbionts.</title>
        <authorList>
            <person name="Paulsen I.T."/>
            <person name="Seshadri R."/>
            <person name="Nelson K.E."/>
            <person name="Eisen J.A."/>
            <person name="Heidelberg J.F."/>
            <person name="Read T.D."/>
            <person name="Dodson R.J."/>
            <person name="Umayam L.A."/>
            <person name="Brinkac L.M."/>
            <person name="Beanan M.J."/>
            <person name="Daugherty S.C."/>
            <person name="DeBoy R.T."/>
            <person name="Durkin A.S."/>
            <person name="Kolonay J.F."/>
            <person name="Madupu R."/>
            <person name="Nelson W.C."/>
            <person name="Ayodeji B."/>
            <person name="Kraul M."/>
            <person name="Shetty J."/>
            <person name="Malek J.A."/>
            <person name="Van Aken S.E."/>
            <person name="Riedmuller S."/>
            <person name="Tettelin H."/>
            <person name="Gill S.R."/>
            <person name="White O."/>
            <person name="Salzberg S.L."/>
            <person name="Hoover D.L."/>
            <person name="Lindler L.E."/>
            <person name="Halling S.M."/>
            <person name="Boyle S.M."/>
            <person name="Fraser C.M."/>
        </authorList>
    </citation>
    <scope>NUCLEOTIDE SEQUENCE [LARGE SCALE GENOMIC DNA]</scope>
    <source>
        <strain>1330</strain>
    </source>
</reference>
<reference key="2">
    <citation type="journal article" date="2011" name="J. Bacteriol.">
        <title>Revised genome sequence of Brucella suis 1330.</title>
        <authorList>
            <person name="Tae H."/>
            <person name="Shallom S."/>
            <person name="Settlage R."/>
            <person name="Preston D."/>
            <person name="Adams L.G."/>
            <person name="Garner H.R."/>
        </authorList>
    </citation>
    <scope>NUCLEOTIDE SEQUENCE [LARGE SCALE GENOMIC DNA]</scope>
    <source>
        <strain>1330</strain>
    </source>
</reference>
<sequence>MSDAFDINDLKRRMEGAVNALKHDLGGLRTGRASASLLEPITIEAYGSTMPINQVANISVPESRMLSVSVWDKSMVGAVERAIRDSGLGLNPITDGMTLRIPLPELNEQRRKELVKIAHQYAEQGRIAARHVRRDGMDQLKKLEKDSVISQDESRVLSEKVQKLTDDTIAEMDKIVAVKEGEIMQV</sequence>
<name>RRF_BRUSU</name>
<organism>
    <name type="scientific">Brucella suis biovar 1 (strain 1330)</name>
    <dbReference type="NCBI Taxonomy" id="204722"/>
    <lineage>
        <taxon>Bacteria</taxon>
        <taxon>Pseudomonadati</taxon>
        <taxon>Pseudomonadota</taxon>
        <taxon>Alphaproteobacteria</taxon>
        <taxon>Hyphomicrobiales</taxon>
        <taxon>Brucellaceae</taxon>
        <taxon>Brucella/Ochrobactrum group</taxon>
        <taxon>Brucella</taxon>
    </lineage>
</organism>
<gene>
    <name evidence="1" type="primary">frr</name>
    <name type="ordered locus">BR1159</name>
    <name type="ordered locus">BS1330_I1155</name>
</gene>
<dbReference type="EMBL" id="AE014291">
    <property type="protein sequence ID" value="AAN30079.1"/>
    <property type="molecule type" value="Genomic_DNA"/>
</dbReference>
<dbReference type="EMBL" id="CP002997">
    <property type="protein sequence ID" value="AEM18497.1"/>
    <property type="molecule type" value="Genomic_DNA"/>
</dbReference>
<dbReference type="RefSeq" id="WP_002964286.1">
    <property type="nucleotide sequence ID" value="NZ_KN046804.1"/>
</dbReference>
<dbReference type="SMR" id="Q8G0D8"/>
<dbReference type="GeneID" id="97533591"/>
<dbReference type="KEGG" id="bms:BR1159"/>
<dbReference type="KEGG" id="bsi:BS1330_I1155"/>
<dbReference type="PATRIC" id="fig|204722.21.peg.1957"/>
<dbReference type="HOGENOM" id="CLU_073981_2_0_5"/>
<dbReference type="PhylomeDB" id="Q8G0D8"/>
<dbReference type="Proteomes" id="UP000007104">
    <property type="component" value="Chromosome I"/>
</dbReference>
<dbReference type="GO" id="GO:0005829">
    <property type="term" value="C:cytosol"/>
    <property type="evidence" value="ECO:0007669"/>
    <property type="project" value="GOC"/>
</dbReference>
<dbReference type="GO" id="GO:0043023">
    <property type="term" value="F:ribosomal large subunit binding"/>
    <property type="evidence" value="ECO:0007669"/>
    <property type="project" value="TreeGrafter"/>
</dbReference>
<dbReference type="GO" id="GO:0002184">
    <property type="term" value="P:cytoplasmic translational termination"/>
    <property type="evidence" value="ECO:0007669"/>
    <property type="project" value="TreeGrafter"/>
</dbReference>
<dbReference type="CDD" id="cd00520">
    <property type="entry name" value="RRF"/>
    <property type="match status" value="1"/>
</dbReference>
<dbReference type="FunFam" id="1.10.132.20:FF:000001">
    <property type="entry name" value="Ribosome-recycling factor"/>
    <property type="match status" value="1"/>
</dbReference>
<dbReference type="FunFam" id="3.30.1360.40:FF:000001">
    <property type="entry name" value="Ribosome-recycling factor"/>
    <property type="match status" value="1"/>
</dbReference>
<dbReference type="Gene3D" id="3.30.1360.40">
    <property type="match status" value="1"/>
</dbReference>
<dbReference type="Gene3D" id="1.10.132.20">
    <property type="entry name" value="Ribosome-recycling factor"/>
    <property type="match status" value="1"/>
</dbReference>
<dbReference type="HAMAP" id="MF_00040">
    <property type="entry name" value="RRF"/>
    <property type="match status" value="1"/>
</dbReference>
<dbReference type="InterPro" id="IPR002661">
    <property type="entry name" value="Ribosome_recyc_fac"/>
</dbReference>
<dbReference type="InterPro" id="IPR023584">
    <property type="entry name" value="Ribosome_recyc_fac_dom"/>
</dbReference>
<dbReference type="InterPro" id="IPR036191">
    <property type="entry name" value="RRF_sf"/>
</dbReference>
<dbReference type="NCBIfam" id="TIGR00496">
    <property type="entry name" value="frr"/>
    <property type="match status" value="1"/>
</dbReference>
<dbReference type="PANTHER" id="PTHR20982:SF3">
    <property type="entry name" value="MITOCHONDRIAL RIBOSOME RECYCLING FACTOR PSEUDO 1"/>
    <property type="match status" value="1"/>
</dbReference>
<dbReference type="PANTHER" id="PTHR20982">
    <property type="entry name" value="RIBOSOME RECYCLING FACTOR"/>
    <property type="match status" value="1"/>
</dbReference>
<dbReference type="Pfam" id="PF01765">
    <property type="entry name" value="RRF"/>
    <property type="match status" value="1"/>
</dbReference>
<dbReference type="SUPFAM" id="SSF55194">
    <property type="entry name" value="Ribosome recycling factor, RRF"/>
    <property type="match status" value="1"/>
</dbReference>